<name>LOLB_PSEAE</name>
<protein>
    <recommendedName>
        <fullName>Outer-membrane lipoprotein LolB</fullName>
    </recommendedName>
</protein>
<dbReference type="EMBL" id="X82071">
    <property type="protein sequence ID" value="CAA57571.1"/>
    <property type="molecule type" value="Genomic_DNA"/>
</dbReference>
<dbReference type="EMBL" id="AE004091">
    <property type="protein sequence ID" value="AAG08055.1"/>
    <property type="molecule type" value="Genomic_DNA"/>
</dbReference>
<dbReference type="PIR" id="E83063">
    <property type="entry name" value="E83063"/>
</dbReference>
<dbReference type="PIR" id="S49375">
    <property type="entry name" value="S49375"/>
</dbReference>
<dbReference type="RefSeq" id="NP_253357.1">
    <property type="nucleotide sequence ID" value="NC_002516.2"/>
</dbReference>
<dbReference type="RefSeq" id="WP_003095005.1">
    <property type="nucleotide sequence ID" value="NZ_QZGE01000029.1"/>
</dbReference>
<dbReference type="SMR" id="P42812"/>
<dbReference type="FunCoup" id="P42812">
    <property type="interactions" value="111"/>
</dbReference>
<dbReference type="STRING" id="208964.PA4668"/>
<dbReference type="PaxDb" id="208964-PA4668"/>
<dbReference type="DNASU" id="881371"/>
<dbReference type="GeneID" id="881371"/>
<dbReference type="KEGG" id="pae:PA4668"/>
<dbReference type="PATRIC" id="fig|208964.12.peg.4890"/>
<dbReference type="PseudoCAP" id="PA4668"/>
<dbReference type="HOGENOM" id="CLU_092816_2_1_6"/>
<dbReference type="InParanoid" id="P42812"/>
<dbReference type="OrthoDB" id="9797618at2"/>
<dbReference type="PhylomeDB" id="P42812"/>
<dbReference type="BioCyc" id="PAER208964:G1FZ6-4764-MONOMER"/>
<dbReference type="Proteomes" id="UP000002438">
    <property type="component" value="Chromosome"/>
</dbReference>
<dbReference type="GO" id="GO:0009279">
    <property type="term" value="C:cell outer membrane"/>
    <property type="evidence" value="ECO:0007669"/>
    <property type="project" value="UniProtKB-SubCell"/>
</dbReference>
<dbReference type="GO" id="GO:0044874">
    <property type="term" value="P:lipoprotein localization to outer membrane"/>
    <property type="evidence" value="ECO:0000314"/>
    <property type="project" value="CACAO"/>
</dbReference>
<dbReference type="GO" id="GO:0089705">
    <property type="term" value="P:protein localization to outer membrane"/>
    <property type="evidence" value="ECO:0000314"/>
    <property type="project" value="CACAO"/>
</dbReference>
<dbReference type="GO" id="GO:0015031">
    <property type="term" value="P:protein transport"/>
    <property type="evidence" value="ECO:0007669"/>
    <property type="project" value="UniProtKB-KW"/>
</dbReference>
<dbReference type="CDD" id="cd16326">
    <property type="entry name" value="LolB"/>
    <property type="match status" value="1"/>
</dbReference>
<dbReference type="FunFam" id="2.50.20.10:FF:000009">
    <property type="entry name" value="Outer-membrane lipoprotein LolB"/>
    <property type="match status" value="1"/>
</dbReference>
<dbReference type="Gene3D" id="2.50.20.10">
    <property type="entry name" value="Lipoprotein localisation LolA/LolB/LppX"/>
    <property type="match status" value="1"/>
</dbReference>
<dbReference type="HAMAP" id="MF_00233">
    <property type="entry name" value="LolB"/>
    <property type="match status" value="1"/>
</dbReference>
<dbReference type="InterPro" id="IPR029046">
    <property type="entry name" value="LolA/LolB/LppX"/>
</dbReference>
<dbReference type="InterPro" id="IPR004565">
    <property type="entry name" value="OM_lipoprot_LolB"/>
</dbReference>
<dbReference type="NCBIfam" id="TIGR00548">
    <property type="entry name" value="lolB"/>
    <property type="match status" value="1"/>
</dbReference>
<dbReference type="Pfam" id="PF03550">
    <property type="entry name" value="LolB"/>
    <property type="match status" value="1"/>
</dbReference>
<dbReference type="SUPFAM" id="SSF89392">
    <property type="entry name" value="Prokaryotic lipoproteins and lipoprotein localization factors"/>
    <property type="match status" value="1"/>
</dbReference>
<dbReference type="PROSITE" id="PS51257">
    <property type="entry name" value="PROKAR_LIPOPROTEIN"/>
    <property type="match status" value="1"/>
</dbReference>
<reference key="1">
    <citation type="journal article" date="1995" name="J. Bacteriol.">
        <title>Regulation of the hemA gene during 5-aminolevulinic acid formation in Pseudomonas aeruginosa.</title>
        <authorList>
            <person name="Hungerer C."/>
            <person name="Troup B."/>
            <person name="Roemling U."/>
            <person name="Jahn D."/>
        </authorList>
    </citation>
    <scope>NUCLEOTIDE SEQUENCE [GENOMIC DNA]</scope>
    <source>
        <strain>ATCC 15692 / DSM 22644 / CIP 104116 / JCM 14847 / LMG 12228 / 1C / PRS 101 / PAO1</strain>
    </source>
</reference>
<reference key="2">
    <citation type="journal article" date="2000" name="Nature">
        <title>Complete genome sequence of Pseudomonas aeruginosa PAO1, an opportunistic pathogen.</title>
        <authorList>
            <person name="Stover C.K."/>
            <person name="Pham X.-Q.T."/>
            <person name="Erwin A.L."/>
            <person name="Mizoguchi S.D."/>
            <person name="Warrener P."/>
            <person name="Hickey M.J."/>
            <person name="Brinkman F.S.L."/>
            <person name="Hufnagle W.O."/>
            <person name="Kowalik D.J."/>
            <person name="Lagrou M."/>
            <person name="Garber R.L."/>
            <person name="Goltry L."/>
            <person name="Tolentino E."/>
            <person name="Westbrock-Wadman S."/>
            <person name="Yuan Y."/>
            <person name="Brody L.L."/>
            <person name="Coulter S.N."/>
            <person name="Folger K.R."/>
            <person name="Kas A."/>
            <person name="Larbig K."/>
            <person name="Lim R.M."/>
            <person name="Smith K.A."/>
            <person name="Spencer D.H."/>
            <person name="Wong G.K.-S."/>
            <person name="Wu Z."/>
            <person name="Paulsen I.T."/>
            <person name="Reizer J."/>
            <person name="Saier M.H. Jr."/>
            <person name="Hancock R.E.W."/>
            <person name="Lory S."/>
            <person name="Olson M.V."/>
        </authorList>
    </citation>
    <scope>NUCLEOTIDE SEQUENCE [LARGE SCALE GENOMIC DNA]</scope>
    <source>
        <strain>ATCC 15692 / DSM 22644 / CIP 104116 / JCM 14847 / LMG 12228 / 1C / PRS 101 / PAO1</strain>
    </source>
</reference>
<keyword id="KW-0998">Cell outer membrane</keyword>
<keyword id="KW-0143">Chaperone</keyword>
<keyword id="KW-0449">Lipoprotein</keyword>
<keyword id="KW-0472">Membrane</keyword>
<keyword id="KW-0564">Palmitate</keyword>
<keyword id="KW-0653">Protein transport</keyword>
<keyword id="KW-1185">Reference proteome</keyword>
<keyword id="KW-0732">Signal</keyword>
<keyword id="KW-0813">Transport</keyword>
<comment type="function">
    <text evidence="1">Plays a critical role in the incorporation of lipoproteins in the outer membrane after they are released by the LolA protein.</text>
</comment>
<comment type="subunit">
    <text evidence="1">Monomer.</text>
</comment>
<comment type="subcellular location">
    <subcellularLocation>
        <location evidence="1">Cell outer membrane</location>
        <topology evidence="1">Lipid-anchor</topology>
    </subcellularLocation>
</comment>
<comment type="similarity">
    <text evidence="3">Belongs to the LolB family.</text>
</comment>
<comment type="caution">
    <text evidence="3">Was originally thought to be involved in delta-aminolevulinic acid biosynthesis.</text>
</comment>
<sequence>MRLRLFLAASALALLSGCAGLTSHEALEGQGDAQTWKTHKQQLSELDAWQIDGKVGIRAPRDSGSGTLFWLQRQGYYDIRLSGPLGRGAARLTGREGAVSLEVAGQGRYQAESPEALLEEQLGWRLPVSHLLWWVRGLPAPDSKSRLTLDADSRLARLEQDGWQIEYTRYAEQNGYWLPERLKLHGQDLDVTLVIKDWQPRQLGR</sequence>
<accession>P42812</accession>
<proteinExistence type="inferred from homology"/>
<organism>
    <name type="scientific">Pseudomonas aeruginosa (strain ATCC 15692 / DSM 22644 / CIP 104116 / JCM 14847 / LMG 12228 / 1C / PRS 101 / PAO1)</name>
    <dbReference type="NCBI Taxonomy" id="208964"/>
    <lineage>
        <taxon>Bacteria</taxon>
        <taxon>Pseudomonadati</taxon>
        <taxon>Pseudomonadota</taxon>
        <taxon>Gammaproteobacteria</taxon>
        <taxon>Pseudomonadales</taxon>
        <taxon>Pseudomonadaceae</taxon>
        <taxon>Pseudomonas</taxon>
    </lineage>
</organism>
<feature type="signal peptide" evidence="2">
    <location>
        <begin position="1"/>
        <end position="17"/>
    </location>
</feature>
<feature type="chain" id="PRO_0000018306" description="Outer-membrane lipoprotein LolB">
    <location>
        <begin position="18"/>
        <end position="205"/>
    </location>
</feature>
<feature type="lipid moiety-binding region" description="N-palmitoyl cysteine" evidence="2">
    <location>
        <position position="18"/>
    </location>
</feature>
<feature type="lipid moiety-binding region" description="S-diacylglycerol cysteine" evidence="2">
    <location>
        <position position="18"/>
    </location>
</feature>
<feature type="sequence conflict" description="In Ref. 1; CAA57571." evidence="3" ref="1">
    <original>ALLEEQ</original>
    <variation>STAGRT</variation>
    <location>
        <begin position="116"/>
        <end position="121"/>
    </location>
</feature>
<gene>
    <name type="primary">lolB</name>
    <name type="synonym">hemM</name>
    <name type="ordered locus">PA4668</name>
</gene>
<evidence type="ECO:0000250" key="1"/>
<evidence type="ECO:0000255" key="2"/>
<evidence type="ECO:0000305" key="3"/>